<keyword id="KW-1003">Cell membrane</keyword>
<keyword id="KW-0472">Membrane</keyword>
<keyword id="KW-1185">Reference proteome</keyword>
<keyword id="KW-0812">Transmembrane</keyword>
<keyword id="KW-1133">Transmembrane helix</keyword>
<protein>
    <recommendedName>
        <fullName>CASP-like protein 4A2</fullName>
        <shortName>ZmCASPL4A2</shortName>
    </recommendedName>
</protein>
<proteinExistence type="evidence at transcript level"/>
<organism>
    <name type="scientific">Zea mays</name>
    <name type="common">Maize</name>
    <dbReference type="NCBI Taxonomy" id="4577"/>
    <lineage>
        <taxon>Eukaryota</taxon>
        <taxon>Viridiplantae</taxon>
        <taxon>Streptophyta</taxon>
        <taxon>Embryophyta</taxon>
        <taxon>Tracheophyta</taxon>
        <taxon>Spermatophyta</taxon>
        <taxon>Magnoliopsida</taxon>
        <taxon>Liliopsida</taxon>
        <taxon>Poales</taxon>
        <taxon>Poaceae</taxon>
        <taxon>PACMAD clade</taxon>
        <taxon>Panicoideae</taxon>
        <taxon>Andropogonodae</taxon>
        <taxon>Andropogoneae</taxon>
        <taxon>Tripsacinae</taxon>
        <taxon>Zea</taxon>
    </lineage>
</organism>
<reference key="1">
    <citation type="submission" date="2009-05" db="EMBL/GenBank/DDBJ databases">
        <title>Maize full-length cDNA project.</title>
        <authorList>
            <person name="Yu Y."/>
            <person name="Currie J."/>
            <person name="Lomeli R."/>
            <person name="Angelova A."/>
            <person name="Collura K."/>
            <person name="Wissotski M."/>
            <person name="Campos D."/>
            <person name="Kudrna D."/>
            <person name="Golser W."/>
            <person name="Ashely E."/>
            <person name="Descour A."/>
            <person name="Fernandes J."/>
            <person name="Soderlund C."/>
            <person name="Walbot V."/>
        </authorList>
    </citation>
    <scope>NUCLEOTIDE SEQUENCE [LARGE SCALE MRNA]</scope>
    <source>
        <strain>cv. B73</strain>
    </source>
</reference>
<reference key="2">
    <citation type="journal article" date="2014" name="Plant Physiol.">
        <title>Functional and evolutionary analysis of the CASPARIAN STRIP MEMBRANE DOMAIN PROTEIN family.</title>
        <authorList>
            <person name="Roppolo D."/>
            <person name="Boeckmann B."/>
            <person name="Pfister A."/>
            <person name="Boutet E."/>
            <person name="Rubio M.C."/>
            <person name="Denervaud-Tendon V."/>
            <person name="Vermeer J.E."/>
            <person name="Gheyselinck J."/>
            <person name="Xenarios I."/>
            <person name="Geldner N."/>
        </authorList>
    </citation>
    <scope>GENE FAMILY</scope>
    <scope>NOMENCLATURE</scope>
</reference>
<dbReference type="EMBL" id="BT087799">
    <property type="protein sequence ID" value="ACR38152.1"/>
    <property type="molecule type" value="mRNA"/>
</dbReference>
<dbReference type="RefSeq" id="NP_001183730.1">
    <property type="nucleotide sequence ID" value="NM_001196801.1"/>
</dbReference>
<dbReference type="FunCoup" id="C4JAF2">
    <property type="interactions" value="33"/>
</dbReference>
<dbReference type="STRING" id="4577.C4JAF2"/>
<dbReference type="PaxDb" id="4577-GRMZM2G139714_P01"/>
<dbReference type="EnsemblPlants" id="Zm00001eb231550_T001">
    <property type="protein sequence ID" value="Zm00001eb231550_P001"/>
    <property type="gene ID" value="Zm00001eb231550"/>
</dbReference>
<dbReference type="GeneID" id="100284695"/>
<dbReference type="Gramene" id="Zm00001eb231550_T001">
    <property type="protein sequence ID" value="Zm00001eb231550_P001"/>
    <property type="gene ID" value="Zm00001eb231550"/>
</dbReference>
<dbReference type="KEGG" id="zma:100284695"/>
<dbReference type="eggNOG" id="ENOG502QW75">
    <property type="taxonomic scope" value="Eukaryota"/>
</dbReference>
<dbReference type="HOGENOM" id="CLU_048961_1_0_1"/>
<dbReference type="InParanoid" id="C4JAF2"/>
<dbReference type="OMA" id="FKLEYPN"/>
<dbReference type="OrthoDB" id="672180at2759"/>
<dbReference type="Proteomes" id="UP000007305">
    <property type="component" value="Chromosome 5"/>
</dbReference>
<dbReference type="ExpressionAtlas" id="C4JAF2">
    <property type="expression patterns" value="baseline and differential"/>
</dbReference>
<dbReference type="GO" id="GO:0005886">
    <property type="term" value="C:plasma membrane"/>
    <property type="evidence" value="ECO:0007669"/>
    <property type="project" value="UniProtKB-SubCell"/>
</dbReference>
<dbReference type="InterPro" id="IPR006702">
    <property type="entry name" value="CASP_dom"/>
</dbReference>
<dbReference type="PANTHER" id="PTHR33573:SF53">
    <property type="entry name" value="CASP-LIKE PROTEIN 4A2"/>
    <property type="match status" value="1"/>
</dbReference>
<dbReference type="PANTHER" id="PTHR33573">
    <property type="entry name" value="CASP-LIKE PROTEIN 4A4"/>
    <property type="match status" value="1"/>
</dbReference>
<dbReference type="Pfam" id="PF04535">
    <property type="entry name" value="CASP_dom"/>
    <property type="match status" value="1"/>
</dbReference>
<sequence length="302" mass="32260">MALQAQQQATPSPTRDRAGSGEWLADTEKLPGAAASPEDVVVASTHHAAAAARYVPPRATSHTAEPNPGRGGGGGWYSWNGGRRARHDPPAPRRQQPAKTPPPAPPLPAAPPPPPAASPAPAPRAPPPHAQVRSADRVVPAILSRKRRAAVMQRAALLARAAAAGLCLAALAVLASDTRRGWARDSYSNYAQFRYSEAVNVVGFLYSVFQFVALAELMRRNKHLIPHPKRDLFDFTMDQVVAYLLISSSSSATARASDLIENWGSDSFPSMANGSIAISFVAFVVFAICSLISAYNLFRRDM</sequence>
<name>CSPLE_MAIZE</name>
<evidence type="ECO:0000250" key="1"/>
<evidence type="ECO:0000255" key="2"/>
<evidence type="ECO:0000256" key="3">
    <source>
        <dbReference type="SAM" id="MobiDB-lite"/>
    </source>
</evidence>
<evidence type="ECO:0000305" key="4"/>
<feature type="chain" id="PRO_0000391573" description="CASP-like protein 4A2">
    <location>
        <begin position="1"/>
        <end position="302"/>
    </location>
</feature>
<feature type="topological domain" description="Cytoplasmic" evidence="2">
    <location>
        <begin position="1"/>
        <end position="154"/>
    </location>
</feature>
<feature type="transmembrane region" description="Helical" evidence="2">
    <location>
        <begin position="155"/>
        <end position="175"/>
    </location>
</feature>
<feature type="topological domain" description="Extracellular" evidence="2">
    <location>
        <begin position="176"/>
        <end position="197"/>
    </location>
</feature>
<feature type="transmembrane region" description="Helical" evidence="2">
    <location>
        <begin position="198"/>
        <end position="218"/>
    </location>
</feature>
<feature type="topological domain" description="Cytoplasmic" evidence="2">
    <location>
        <begin position="219"/>
        <end position="238"/>
    </location>
</feature>
<feature type="transmembrane region" description="Helical" evidence="2">
    <location>
        <begin position="239"/>
        <end position="256"/>
    </location>
</feature>
<feature type="topological domain" description="Extracellular" evidence="2">
    <location>
        <begin position="257"/>
        <end position="273"/>
    </location>
</feature>
<feature type="transmembrane region" description="Helical" evidence="2">
    <location>
        <begin position="274"/>
        <end position="294"/>
    </location>
</feature>
<feature type="topological domain" description="Cytoplasmic" evidence="2">
    <location>
        <begin position="295"/>
        <end position="302"/>
    </location>
</feature>
<feature type="region of interest" description="Disordered" evidence="3">
    <location>
        <begin position="1"/>
        <end position="134"/>
    </location>
</feature>
<feature type="compositionally biased region" description="Polar residues" evidence="3">
    <location>
        <begin position="1"/>
        <end position="13"/>
    </location>
</feature>
<feature type="compositionally biased region" description="Low complexity" evidence="3">
    <location>
        <begin position="40"/>
        <end position="60"/>
    </location>
</feature>
<feature type="compositionally biased region" description="Pro residues" evidence="3">
    <location>
        <begin position="99"/>
        <end position="129"/>
    </location>
</feature>
<comment type="subunit">
    <text evidence="1">Homodimer and heterodimers.</text>
</comment>
<comment type="subcellular location">
    <subcellularLocation>
        <location evidence="1">Cell membrane</location>
        <topology evidence="1">Multi-pass membrane protein</topology>
    </subcellularLocation>
</comment>
<comment type="similarity">
    <text evidence="4">Belongs to the Casparian strip membrane proteins (CASP) family.</text>
</comment>
<accession>C4JAF2</accession>